<evidence type="ECO:0000255" key="1">
    <source>
        <dbReference type="HAMAP-Rule" id="MF_01390"/>
    </source>
</evidence>
<accession>Q85ZU4</accession>
<sequence>MEKFEGYSEKHKSRQQYFVYPLLFQEYIYAFAHDYGLNGSEPVEIVSCNNKKFSSLLVKRLIIRMYQQNFLDNSVNNPNQDRLLDYKNYFYSEFYSQILSEGFAIVVEIPFSLRELSCPKEKEIPKFQNLRSIHSIFPFLEDKFLHLDYLSHIEIPYPIHLEILVQLLQYRIQDVPSLHLLRFFLNYYSNWNSFITSMKSIFYFQKENKRLFKFLYNSYVSEYEFFLLFLRKQSSCLPLASSGTFLERIHFSRKMEHFGIMYPGFSRKTLWFFMDPLMHYVRYQGKAILASKGSFFLKKKWKCYLINFWQYYFFFWTQPRRIHINQLANSCFDFMGYLSSVPKSPLLVRNQMLENSFLIDTRMKKFDTIVPATLLIGYLSKAQFCTGSGHPISKPIWTDLSDWDILDRFGRICRNLFHYHSGSSKKRTLYRLKYILRLSCARTLARKHKSTVRTFMQRLGSAFLEEFFTEEEQVFSLMFTKTTLFSFCGSHTERIWYLDIIRINDLVNPLN</sequence>
<protein>
    <recommendedName>
        <fullName evidence="1">Maturase K</fullName>
    </recommendedName>
    <alternativeName>
        <fullName evidence="1">Intron maturase</fullName>
    </alternativeName>
</protein>
<comment type="function">
    <text evidence="1">Usually encoded in the trnK tRNA gene intron. Probably assists in splicing its own and other chloroplast group II introns.</text>
</comment>
<comment type="subcellular location">
    <subcellularLocation>
        <location>Plastid</location>
        <location>Chloroplast</location>
    </subcellularLocation>
</comment>
<comment type="similarity">
    <text evidence="1">Belongs to the intron maturase 2 family. MatK subfamily.</text>
</comment>
<reference key="1">
    <citation type="journal article" date="2002" name="Genome">
        <title>Molecular phylogeny of the genus Hordeum using three chloroplast DNA sequences.</title>
        <authorList>
            <person name="Nishikawa T."/>
            <person name="Salomon B."/>
            <person name="Komatsuda T."/>
            <person name="von Bothmer R."/>
            <person name="Kadowaki K."/>
        </authorList>
    </citation>
    <scope>NUCLEOTIDE SEQUENCE [GENOMIC DNA]</scope>
    <source>
        <strain>H1310</strain>
    </source>
</reference>
<organism>
    <name type="scientific">Hordeum lechleri</name>
    <name type="common">Wild barley</name>
    <dbReference type="NCBI Taxonomy" id="38856"/>
    <lineage>
        <taxon>Eukaryota</taxon>
        <taxon>Viridiplantae</taxon>
        <taxon>Streptophyta</taxon>
        <taxon>Embryophyta</taxon>
        <taxon>Tracheophyta</taxon>
        <taxon>Spermatophyta</taxon>
        <taxon>Magnoliopsida</taxon>
        <taxon>Liliopsida</taxon>
        <taxon>Poales</taxon>
        <taxon>Poaceae</taxon>
        <taxon>BOP clade</taxon>
        <taxon>Pooideae</taxon>
        <taxon>Triticodae</taxon>
        <taxon>Triticeae</taxon>
        <taxon>Hordeinae</taxon>
        <taxon>Hordeum</taxon>
    </lineage>
</organism>
<name>MATK_HORLE</name>
<dbReference type="EMBL" id="AB078107">
    <property type="protein sequence ID" value="BAC54859.1"/>
    <property type="molecule type" value="Genomic_DNA"/>
</dbReference>
<dbReference type="GO" id="GO:0009507">
    <property type="term" value="C:chloroplast"/>
    <property type="evidence" value="ECO:0007669"/>
    <property type="project" value="UniProtKB-SubCell"/>
</dbReference>
<dbReference type="GO" id="GO:0003723">
    <property type="term" value="F:RNA binding"/>
    <property type="evidence" value="ECO:0007669"/>
    <property type="project" value="UniProtKB-KW"/>
</dbReference>
<dbReference type="GO" id="GO:0006397">
    <property type="term" value="P:mRNA processing"/>
    <property type="evidence" value="ECO:0007669"/>
    <property type="project" value="UniProtKB-KW"/>
</dbReference>
<dbReference type="GO" id="GO:0008380">
    <property type="term" value="P:RNA splicing"/>
    <property type="evidence" value="ECO:0007669"/>
    <property type="project" value="UniProtKB-UniRule"/>
</dbReference>
<dbReference type="GO" id="GO:0008033">
    <property type="term" value="P:tRNA processing"/>
    <property type="evidence" value="ECO:0007669"/>
    <property type="project" value="UniProtKB-KW"/>
</dbReference>
<dbReference type="HAMAP" id="MF_01390">
    <property type="entry name" value="MatK"/>
    <property type="match status" value="1"/>
</dbReference>
<dbReference type="InterPro" id="IPR024937">
    <property type="entry name" value="Domain_X"/>
</dbReference>
<dbReference type="InterPro" id="IPR002866">
    <property type="entry name" value="Maturase_MatK"/>
</dbReference>
<dbReference type="InterPro" id="IPR024942">
    <property type="entry name" value="Maturase_MatK_N"/>
</dbReference>
<dbReference type="PANTHER" id="PTHR34811">
    <property type="entry name" value="MATURASE K"/>
    <property type="match status" value="1"/>
</dbReference>
<dbReference type="PANTHER" id="PTHR34811:SF1">
    <property type="entry name" value="MATURASE K"/>
    <property type="match status" value="1"/>
</dbReference>
<dbReference type="Pfam" id="PF01348">
    <property type="entry name" value="Intron_maturas2"/>
    <property type="match status" value="1"/>
</dbReference>
<dbReference type="Pfam" id="PF01824">
    <property type="entry name" value="MatK_N"/>
    <property type="match status" value="1"/>
</dbReference>
<gene>
    <name evidence="1" type="primary">matK</name>
</gene>
<keyword id="KW-0150">Chloroplast</keyword>
<keyword id="KW-0507">mRNA processing</keyword>
<keyword id="KW-0934">Plastid</keyword>
<keyword id="KW-0694">RNA-binding</keyword>
<keyword id="KW-0819">tRNA processing</keyword>
<feature type="chain" id="PRO_0000143421" description="Maturase K">
    <location>
        <begin position="1"/>
        <end position="511"/>
    </location>
</feature>
<proteinExistence type="inferred from homology"/>
<geneLocation type="chloroplast"/>